<gene>
    <name evidence="1" type="primary">miaB</name>
    <name type="ordered locus">WP0629</name>
</gene>
<accession>B3CLG9</accession>
<keyword id="KW-0004">4Fe-4S</keyword>
<keyword id="KW-0963">Cytoplasm</keyword>
<keyword id="KW-0408">Iron</keyword>
<keyword id="KW-0411">Iron-sulfur</keyword>
<keyword id="KW-0479">Metal-binding</keyword>
<keyword id="KW-0949">S-adenosyl-L-methionine</keyword>
<keyword id="KW-0808">Transferase</keyword>
<keyword id="KW-0819">tRNA processing</keyword>
<evidence type="ECO:0000255" key="1">
    <source>
        <dbReference type="HAMAP-Rule" id="MF_01864"/>
    </source>
</evidence>
<evidence type="ECO:0000255" key="2">
    <source>
        <dbReference type="PROSITE-ProRule" id="PRU01266"/>
    </source>
</evidence>
<proteinExistence type="inferred from homology"/>
<sequence length="440" mass="49677">MKGLYIKTYGCQMNVYDSILMENIVKPLGFNVVSDAEQADLVILNTCHIREKAAEKLYSELGRIHSSQKNKEMTIVVAGCVAQAEGEEVFRRAPFVDIVVGPQSIPALPELIVKASRSKGHVINTDFPEVAKFDKLPDECYGNSQGSSAFLAIQEGCDKFCTFCVVPYTRGAEYSRPVNEIFREALNLVKNGAKEITLLGQNVNAYHGECEGEVWDLGKLISHIAKIEKLERIRYTTSHPRDMHESLYLVHAEESKLMPFVHLPVQSGSNKILHAMNRKHTAEEYLGIIDRLRKLKPEIEFSSDFIVGFPGETEKDFEETMKLVEKVKYAQAYSFKYSPRPGTPGAERKDQVPEEVKTERLLRLQELISKQQLEFNQSMIGKTIPVLFSDKKGKHQNQIIGKSPYMQSVCVDDPDDKYKDKIVNVRILEARQNSLLGCAA</sequence>
<protein>
    <recommendedName>
        <fullName evidence="1">tRNA-2-methylthio-N(6)-dimethylallyladenosine synthase</fullName>
        <ecNumber evidence="1">2.8.4.3</ecNumber>
    </recommendedName>
    <alternativeName>
        <fullName evidence="1">(Dimethylallyl)adenosine tRNA methylthiotransferase MiaB</fullName>
    </alternativeName>
    <alternativeName>
        <fullName evidence="1">tRNA-i(6)A37 methylthiotransferase</fullName>
    </alternativeName>
</protein>
<organism>
    <name type="scientific">Wolbachia pipientis subsp. Culex pipiens (strain wPip)</name>
    <dbReference type="NCBI Taxonomy" id="570417"/>
    <lineage>
        <taxon>Bacteria</taxon>
        <taxon>Pseudomonadati</taxon>
        <taxon>Pseudomonadota</taxon>
        <taxon>Alphaproteobacteria</taxon>
        <taxon>Rickettsiales</taxon>
        <taxon>Anaplasmataceae</taxon>
        <taxon>Wolbachieae</taxon>
        <taxon>Wolbachia</taxon>
    </lineage>
</organism>
<dbReference type="EC" id="2.8.4.3" evidence="1"/>
<dbReference type="EMBL" id="AM999887">
    <property type="protein sequence ID" value="CAQ54737.1"/>
    <property type="molecule type" value="Genomic_DNA"/>
</dbReference>
<dbReference type="RefSeq" id="WP_012481870.1">
    <property type="nucleotide sequence ID" value="NC_010981.1"/>
</dbReference>
<dbReference type="SMR" id="B3CLG9"/>
<dbReference type="KEGG" id="wpi:WP0629"/>
<dbReference type="eggNOG" id="COG0621">
    <property type="taxonomic scope" value="Bacteria"/>
</dbReference>
<dbReference type="HOGENOM" id="CLU_018697_2_0_5"/>
<dbReference type="Proteomes" id="UP000008814">
    <property type="component" value="Chromosome"/>
</dbReference>
<dbReference type="GO" id="GO:0005829">
    <property type="term" value="C:cytosol"/>
    <property type="evidence" value="ECO:0007669"/>
    <property type="project" value="TreeGrafter"/>
</dbReference>
<dbReference type="GO" id="GO:0051539">
    <property type="term" value="F:4 iron, 4 sulfur cluster binding"/>
    <property type="evidence" value="ECO:0007669"/>
    <property type="project" value="UniProtKB-UniRule"/>
</dbReference>
<dbReference type="GO" id="GO:0046872">
    <property type="term" value="F:metal ion binding"/>
    <property type="evidence" value="ECO:0007669"/>
    <property type="project" value="UniProtKB-KW"/>
</dbReference>
<dbReference type="GO" id="GO:0035597">
    <property type="term" value="F:N6-isopentenyladenosine methylthiotransferase activity"/>
    <property type="evidence" value="ECO:0007669"/>
    <property type="project" value="TreeGrafter"/>
</dbReference>
<dbReference type="CDD" id="cd01335">
    <property type="entry name" value="Radical_SAM"/>
    <property type="match status" value="1"/>
</dbReference>
<dbReference type="FunFam" id="3.40.50.12160:FF:000003">
    <property type="entry name" value="CDK5 regulatory subunit-associated protein 1"/>
    <property type="match status" value="1"/>
</dbReference>
<dbReference type="FunFam" id="3.80.30.20:FF:000001">
    <property type="entry name" value="tRNA-2-methylthio-N(6)-dimethylallyladenosine synthase 2"/>
    <property type="match status" value="1"/>
</dbReference>
<dbReference type="Gene3D" id="3.40.50.12160">
    <property type="entry name" value="Methylthiotransferase, N-terminal domain"/>
    <property type="match status" value="1"/>
</dbReference>
<dbReference type="Gene3D" id="3.80.30.20">
    <property type="entry name" value="tm_1862 like domain"/>
    <property type="match status" value="1"/>
</dbReference>
<dbReference type="HAMAP" id="MF_01864">
    <property type="entry name" value="tRNA_metthiotr_MiaB"/>
    <property type="match status" value="1"/>
</dbReference>
<dbReference type="InterPro" id="IPR006638">
    <property type="entry name" value="Elp3/MiaA/NifB-like_rSAM"/>
</dbReference>
<dbReference type="InterPro" id="IPR005839">
    <property type="entry name" value="Methylthiotransferase"/>
</dbReference>
<dbReference type="InterPro" id="IPR020612">
    <property type="entry name" value="Methylthiotransferase_CS"/>
</dbReference>
<dbReference type="InterPro" id="IPR013848">
    <property type="entry name" value="Methylthiotransferase_N"/>
</dbReference>
<dbReference type="InterPro" id="IPR038135">
    <property type="entry name" value="Methylthiotransferase_N_sf"/>
</dbReference>
<dbReference type="InterPro" id="IPR006463">
    <property type="entry name" value="MiaB_methiolase"/>
</dbReference>
<dbReference type="InterPro" id="IPR007197">
    <property type="entry name" value="rSAM"/>
</dbReference>
<dbReference type="InterPro" id="IPR023404">
    <property type="entry name" value="rSAM_horseshoe"/>
</dbReference>
<dbReference type="InterPro" id="IPR002792">
    <property type="entry name" value="TRAM_dom"/>
</dbReference>
<dbReference type="NCBIfam" id="TIGR01574">
    <property type="entry name" value="miaB-methiolase"/>
    <property type="match status" value="1"/>
</dbReference>
<dbReference type="NCBIfam" id="TIGR00089">
    <property type="entry name" value="MiaB/RimO family radical SAM methylthiotransferase"/>
    <property type="match status" value="1"/>
</dbReference>
<dbReference type="PANTHER" id="PTHR43020">
    <property type="entry name" value="CDK5 REGULATORY SUBUNIT-ASSOCIATED PROTEIN 1"/>
    <property type="match status" value="1"/>
</dbReference>
<dbReference type="PANTHER" id="PTHR43020:SF2">
    <property type="entry name" value="MITOCHONDRIAL TRNA METHYLTHIOTRANSFERASE CDK5RAP1"/>
    <property type="match status" value="1"/>
</dbReference>
<dbReference type="Pfam" id="PF04055">
    <property type="entry name" value="Radical_SAM"/>
    <property type="match status" value="1"/>
</dbReference>
<dbReference type="Pfam" id="PF01938">
    <property type="entry name" value="TRAM"/>
    <property type="match status" value="1"/>
</dbReference>
<dbReference type="Pfam" id="PF00919">
    <property type="entry name" value="UPF0004"/>
    <property type="match status" value="1"/>
</dbReference>
<dbReference type="SFLD" id="SFLDF00273">
    <property type="entry name" value="(dimethylallyl)adenosine_tRNA"/>
    <property type="match status" value="1"/>
</dbReference>
<dbReference type="SFLD" id="SFLDG01082">
    <property type="entry name" value="B12-binding_domain_containing"/>
    <property type="match status" value="1"/>
</dbReference>
<dbReference type="SFLD" id="SFLDS00029">
    <property type="entry name" value="Radical_SAM"/>
    <property type="match status" value="1"/>
</dbReference>
<dbReference type="SMART" id="SM00729">
    <property type="entry name" value="Elp3"/>
    <property type="match status" value="1"/>
</dbReference>
<dbReference type="SUPFAM" id="SSF102114">
    <property type="entry name" value="Radical SAM enzymes"/>
    <property type="match status" value="1"/>
</dbReference>
<dbReference type="PROSITE" id="PS51449">
    <property type="entry name" value="MTTASE_N"/>
    <property type="match status" value="1"/>
</dbReference>
<dbReference type="PROSITE" id="PS01278">
    <property type="entry name" value="MTTASE_RADICAL"/>
    <property type="match status" value="1"/>
</dbReference>
<dbReference type="PROSITE" id="PS51918">
    <property type="entry name" value="RADICAL_SAM"/>
    <property type="match status" value="1"/>
</dbReference>
<dbReference type="PROSITE" id="PS50926">
    <property type="entry name" value="TRAM"/>
    <property type="match status" value="1"/>
</dbReference>
<name>MIAB_WOLPP</name>
<reference key="1">
    <citation type="journal article" date="2008" name="Mol. Biol. Evol.">
        <title>Genome evolution of Wolbachia strain wPip from the Culex pipiens group.</title>
        <authorList>
            <person name="Klasson L."/>
            <person name="Walker T."/>
            <person name="Sebaihia M."/>
            <person name="Sanders M.J."/>
            <person name="Quail M.A."/>
            <person name="Lord A."/>
            <person name="Sanders S."/>
            <person name="Earl J."/>
            <person name="O'Neill S.L."/>
            <person name="Thomson N."/>
            <person name="Sinkins S.P."/>
            <person name="Parkhill J."/>
        </authorList>
    </citation>
    <scope>NUCLEOTIDE SEQUENCE [LARGE SCALE GENOMIC DNA]</scope>
    <source>
        <strain>wPip</strain>
    </source>
</reference>
<feature type="chain" id="PRO_0000374637" description="tRNA-2-methylthio-N(6)-dimethylallyladenosine synthase">
    <location>
        <begin position="1"/>
        <end position="440"/>
    </location>
</feature>
<feature type="domain" description="MTTase N-terminal" evidence="1">
    <location>
        <begin position="2"/>
        <end position="117"/>
    </location>
</feature>
<feature type="domain" description="Radical SAM core" evidence="2">
    <location>
        <begin position="143"/>
        <end position="374"/>
    </location>
</feature>
<feature type="domain" description="TRAM" evidence="1">
    <location>
        <begin position="377"/>
        <end position="440"/>
    </location>
</feature>
<feature type="binding site" evidence="1">
    <location>
        <position position="11"/>
    </location>
    <ligand>
        <name>[4Fe-4S] cluster</name>
        <dbReference type="ChEBI" id="CHEBI:49883"/>
        <label>1</label>
    </ligand>
</feature>
<feature type="binding site" evidence="1">
    <location>
        <position position="47"/>
    </location>
    <ligand>
        <name>[4Fe-4S] cluster</name>
        <dbReference type="ChEBI" id="CHEBI:49883"/>
        <label>1</label>
    </ligand>
</feature>
<feature type="binding site" evidence="1">
    <location>
        <position position="80"/>
    </location>
    <ligand>
        <name>[4Fe-4S] cluster</name>
        <dbReference type="ChEBI" id="CHEBI:49883"/>
        <label>1</label>
    </ligand>
</feature>
<feature type="binding site" evidence="1">
    <location>
        <position position="157"/>
    </location>
    <ligand>
        <name>[4Fe-4S] cluster</name>
        <dbReference type="ChEBI" id="CHEBI:49883"/>
        <label>2</label>
        <note>4Fe-4S-S-AdoMet</note>
    </ligand>
</feature>
<feature type="binding site" evidence="1">
    <location>
        <position position="161"/>
    </location>
    <ligand>
        <name>[4Fe-4S] cluster</name>
        <dbReference type="ChEBI" id="CHEBI:49883"/>
        <label>2</label>
        <note>4Fe-4S-S-AdoMet</note>
    </ligand>
</feature>
<feature type="binding site" evidence="1">
    <location>
        <position position="164"/>
    </location>
    <ligand>
        <name>[4Fe-4S] cluster</name>
        <dbReference type="ChEBI" id="CHEBI:49883"/>
        <label>2</label>
        <note>4Fe-4S-S-AdoMet</note>
    </ligand>
</feature>
<comment type="function">
    <text evidence="1">Catalyzes the methylthiolation of N6-(dimethylallyl)adenosine (i(6)A), leading to the formation of 2-methylthio-N6-(dimethylallyl)adenosine (ms(2)i(6)A) at position 37 in tRNAs that read codons beginning with uridine.</text>
</comment>
<comment type="catalytic activity">
    <reaction evidence="1">
        <text>N(6)-dimethylallyladenosine(37) in tRNA + (sulfur carrier)-SH + AH2 + 2 S-adenosyl-L-methionine = 2-methylsulfanyl-N(6)-dimethylallyladenosine(37) in tRNA + (sulfur carrier)-H + 5'-deoxyadenosine + L-methionine + A + S-adenosyl-L-homocysteine + 2 H(+)</text>
        <dbReference type="Rhea" id="RHEA:37067"/>
        <dbReference type="Rhea" id="RHEA-COMP:10375"/>
        <dbReference type="Rhea" id="RHEA-COMP:10376"/>
        <dbReference type="Rhea" id="RHEA-COMP:14737"/>
        <dbReference type="Rhea" id="RHEA-COMP:14739"/>
        <dbReference type="ChEBI" id="CHEBI:13193"/>
        <dbReference type="ChEBI" id="CHEBI:15378"/>
        <dbReference type="ChEBI" id="CHEBI:17319"/>
        <dbReference type="ChEBI" id="CHEBI:17499"/>
        <dbReference type="ChEBI" id="CHEBI:29917"/>
        <dbReference type="ChEBI" id="CHEBI:57844"/>
        <dbReference type="ChEBI" id="CHEBI:57856"/>
        <dbReference type="ChEBI" id="CHEBI:59789"/>
        <dbReference type="ChEBI" id="CHEBI:64428"/>
        <dbReference type="ChEBI" id="CHEBI:74415"/>
        <dbReference type="ChEBI" id="CHEBI:74417"/>
        <dbReference type="EC" id="2.8.4.3"/>
    </reaction>
</comment>
<comment type="cofactor">
    <cofactor evidence="1">
        <name>[4Fe-4S] cluster</name>
        <dbReference type="ChEBI" id="CHEBI:49883"/>
    </cofactor>
    <text evidence="1">Binds 2 [4Fe-4S] clusters. One cluster is coordinated with 3 cysteines and an exchangeable S-adenosyl-L-methionine.</text>
</comment>
<comment type="subunit">
    <text evidence="1">Monomer.</text>
</comment>
<comment type="subcellular location">
    <subcellularLocation>
        <location evidence="1">Cytoplasm</location>
    </subcellularLocation>
</comment>
<comment type="similarity">
    <text evidence="1">Belongs to the methylthiotransferase family. MiaB subfamily.</text>
</comment>